<name>CCL15_HUMAN</name>
<reference key="1">
    <citation type="journal article" date="1997" name="J. Immunol.">
        <title>Molecular cloning of leukotactin-1: a novel human beta-chemokine, a chemoattractant for neutrophils, monocytes, and lymphocytes, and a potent agonist at CC chemokine receptors 1 and 3.</title>
        <authorList>
            <person name="Youn B.-S."/>
            <person name="Zhang S.M."/>
            <person name="Lee E.K."/>
            <person name="Park D.H."/>
            <person name="Broxmeyer H.E."/>
            <person name="Murphy P.M."/>
            <person name="Locati M."/>
            <person name="Pease J.E."/>
            <person name="Kim K.K."/>
            <person name="Antol K."/>
            <person name="Kwon B.S."/>
        </authorList>
    </citation>
    <scope>NUCLEOTIDE SEQUENCE [MRNA]</scope>
</reference>
<reference key="2">
    <citation type="journal article" date="1998" name="J. Clin. Immunol.">
        <title>Molecular cloning and functional characterization of human MIP-1 delta, a new C-C chemokine related to mouse CCF-18 and C10.</title>
        <authorList>
            <person name="Wang W."/>
            <person name="Bacon K.B."/>
            <person name="Oldham E.R."/>
            <person name="Schall T.J."/>
        </authorList>
    </citation>
    <scope>NUCLEOTIDE SEQUENCE [MRNA]</scope>
    <scope>VARIANT ILE-24</scope>
    <source>
        <tissue>Spleen</tissue>
    </source>
</reference>
<reference key="3">
    <citation type="journal article" date="1998" name="Proc. Natl. Acad. Sci. U.S.A.">
        <title>HCC-2, a human chemokine: gene structure, expression pattern, and biological activity.</title>
        <authorList>
            <person name="Pardigol A."/>
            <person name="Forssmann U."/>
            <person name="Zucht H.-D."/>
            <person name="Loetscher P."/>
            <person name="Schulz-Knappe P."/>
            <person name="Baggiolini M."/>
            <person name="Forssmann W.-G."/>
            <person name="Maegert H.-J."/>
        </authorList>
    </citation>
    <scope>NUCLEOTIDE SEQUENCE [MRNA]</scope>
    <scope>CHARACTERIZATION</scope>
    <source>
        <tissue>Liver</tissue>
    </source>
</reference>
<reference key="4">
    <citation type="journal article" date="1999" name="J. Interferon Cytokine Res.">
        <title>Organization of the chemokine gene cluster on human chromosome 17q11.2 containing the genes for CC chemokine MPIF-1, HCC-2, LEC, and RANTES.</title>
        <authorList>
            <person name="Nomiyama H."/>
            <person name="Fukuda S."/>
            <person name="Iio M."/>
            <person name="Tanase S."/>
            <person name="Miura R."/>
            <person name="Yoshie O."/>
        </authorList>
    </citation>
    <scope>NUCLEOTIDE SEQUENCE [GENOMIC DNA]</scope>
</reference>
<reference key="5">
    <citation type="submission" date="2005-09" db="EMBL/GenBank/DDBJ databases">
        <authorList>
            <person name="Mural R.J."/>
            <person name="Istrail S."/>
            <person name="Sutton G.G."/>
            <person name="Florea L."/>
            <person name="Halpern A.L."/>
            <person name="Mobarry C.M."/>
            <person name="Lippert R."/>
            <person name="Walenz B."/>
            <person name="Shatkay H."/>
            <person name="Dew I."/>
            <person name="Miller J.R."/>
            <person name="Flanigan M.J."/>
            <person name="Edwards N.J."/>
            <person name="Bolanos R."/>
            <person name="Fasulo D."/>
            <person name="Halldorsson B.V."/>
            <person name="Hannenhalli S."/>
            <person name="Turner R."/>
            <person name="Yooseph S."/>
            <person name="Lu F."/>
            <person name="Nusskern D.R."/>
            <person name="Shue B.C."/>
            <person name="Zheng X.H."/>
            <person name="Zhong F."/>
            <person name="Delcher A.L."/>
            <person name="Huson D.H."/>
            <person name="Kravitz S.A."/>
            <person name="Mouchard L."/>
            <person name="Reinert K."/>
            <person name="Remington K.A."/>
            <person name="Clark A.G."/>
            <person name="Waterman M.S."/>
            <person name="Eichler E.E."/>
            <person name="Adams M.D."/>
            <person name="Hunkapiller M.W."/>
            <person name="Myers E.W."/>
            <person name="Venter J.C."/>
        </authorList>
    </citation>
    <scope>NUCLEOTIDE SEQUENCE [LARGE SCALE GENOMIC DNA]</scope>
</reference>
<reference key="6">
    <citation type="journal article" date="2004" name="Genome Res.">
        <title>The status, quality, and expansion of the NIH full-length cDNA project: the Mammalian Gene Collection (MGC).</title>
        <authorList>
            <consortium name="The MGC Project Team"/>
        </authorList>
    </citation>
    <scope>NUCLEOTIDE SEQUENCE [LARGE SCALE MRNA]</scope>
    <source>
        <tissue>Brain</tissue>
    </source>
</reference>
<reference key="7">
    <citation type="submission" date="1997-01" db="UniProtKB">
        <authorList>
            <person name="Coulin F."/>
            <person name="Power C.A."/>
            <person name="Alouani S."/>
            <person name="Peitsch M.C."/>
            <person name="Schroeder J.-M."/>
            <person name="Moshizuki M."/>
            <person name="Clark-Lewis I."/>
            <person name="Wells T.N.C."/>
        </authorList>
    </citation>
    <scope>NUCLEOTIDE SEQUENCE [MRNA] OF 12-113</scope>
</reference>
<reference key="8">
    <citation type="journal article" date="2004" name="Protein Sci.">
        <title>Signal peptide prediction based on analysis of experimentally verified cleavage sites.</title>
        <authorList>
            <person name="Zhang Z."/>
            <person name="Henzel W.J."/>
        </authorList>
    </citation>
    <scope>PROTEIN SEQUENCE OF 22-36</scope>
</reference>
<reference key="9">
    <citation type="journal article" date="1997" name="J. Leukoc. Biol.">
        <title>The chemokine information source: identification and characterization of novel chemokines using the WorldWideWeb and expressed sequence tag databases.</title>
        <authorList>
            <person name="Wells T.N.C."/>
            <person name="Peitsch M.C."/>
        </authorList>
    </citation>
    <scope>DISCUSSION OF SEQUENCE</scope>
</reference>
<reference key="10">
    <citation type="journal article" date="1998" name="Blood">
        <title>Characterization of CKbeta8 and CKbeta8-1: two alternatively spliced forms of human beta-chemokine, chemoattractants for neutrophils, monocytes, and lymphocytes, and potent agonists at CC chemokine receptor 1.</title>
        <authorList>
            <person name="Youn B.-S."/>
            <person name="Zhang S.M."/>
            <person name="Broxmeyer H.E."/>
            <person name="Cooper S."/>
            <person name="Antol K."/>
            <person name="Fraser M. Jr."/>
            <person name="Kwon B.S."/>
        </authorList>
    </citation>
    <scope>TISSUE SPECIFICITY</scope>
</reference>
<reference key="11">
    <citation type="journal article" date="2005" name="J. Immunol.">
        <title>Proteolytic activation of alternative CCR1 ligands in inflammation.</title>
        <authorList>
            <person name="Berahovich R.D."/>
            <person name="Miao Z."/>
            <person name="Wang Y."/>
            <person name="Premack B."/>
            <person name="Howard M.C."/>
            <person name="Schall T.J."/>
        </authorList>
    </citation>
    <scope>IDENTIFICATION OF CCL15(22-92); CCL15(25-92) AND CCL15(29-92)</scope>
    <scope>PROTEOLYTIC PROCESSING OF N-TERMINUS</scope>
    <scope>TISSUE SPECIFICITY</scope>
    <scope>FUNCTION</scope>
</reference>
<reference key="12">
    <citation type="journal article" date="1999" name="Biochemistry">
        <title>Solution structure of the human CC chemokine 2: A monomeric representative of the CC chemokine subtype.</title>
        <authorList>
            <person name="Sticht H."/>
            <person name="Escher S.E."/>
            <person name="Schweimer K."/>
            <person name="Forssmann W.G."/>
            <person name="Rosch P."/>
            <person name="Adermann K."/>
        </authorList>
    </citation>
    <scope>STRUCTURE BY NMR OF 48-113</scope>
    <scope>SUBUNIT</scope>
    <scope>DISULFIDE BONDS</scope>
</reference>
<comment type="function">
    <text evidence="3">Chemotactic factor that attracts T-cells and monocytes, but not neutrophils, eosinophils, or B-cells. Acts mainly via CC chemokine receptor CCR1. Also binds to CCR3. CCL15(22-92), CCL15(25-92) and CCL15(29-92) are more potent chemoattractants than the CCL15.</text>
</comment>
<comment type="subunit">
    <text evidence="1">Monomer.</text>
</comment>
<comment type="subcellular location">
    <subcellularLocation>
        <location>Secreted</location>
    </subcellularLocation>
</comment>
<comment type="tissue specificity">
    <text evidence="3 4">Most abundant in heart, skeletal muscle and adrenal gland. Lower levels in placenta, liver, pancreas and bone marrow. CCL15(22-92), CCL15(25-92) and CCL15(29-92) are found in high levels in synovial fluids from rheumatoid patients.</text>
</comment>
<comment type="PTM">
    <text evidence="3">The N-terminal is proteolytically cleaved by proteases associated with inflammatory responses. The processed forms CCL15(22-92), CCL15(25-92) and CCL15(29-92) exhibit increase in CCR1-mediated signaling and chemotaxis assays in vitro.</text>
</comment>
<comment type="similarity">
    <text evidence="6">Belongs to the intercrine beta (chemokine CC) family.</text>
</comment>
<comment type="online information" name="Wikipedia">
    <link uri="https://en.wikipedia.org/wiki/CCL15"/>
    <text>CCL15 entry</text>
</comment>
<feature type="signal peptide" evidence="2">
    <location>
        <begin position="1"/>
        <end position="21"/>
    </location>
</feature>
<feature type="chain" id="PRO_0000005208" description="C-C motif chemokine 15">
    <location>
        <begin position="22"/>
        <end position="113"/>
    </location>
</feature>
<feature type="chain" id="PRO_0000041868" description="CCL15(22-92)" evidence="3">
    <location>
        <begin position="43"/>
        <end position="113"/>
    </location>
</feature>
<feature type="chain" id="PRO_0000041869" description="CCL15(25-92)" evidence="3">
    <location>
        <begin position="46"/>
        <end position="113"/>
    </location>
</feature>
<feature type="chain" id="PRO_0000041870" description="CCL15(29-92)" evidence="3">
    <location>
        <begin position="50"/>
        <end position="113"/>
    </location>
</feature>
<feature type="disulfide bond" evidence="1">
    <location>
        <begin position="53"/>
        <end position="77"/>
    </location>
</feature>
<feature type="disulfide bond" evidence="1">
    <location>
        <begin position="54"/>
        <end position="93"/>
    </location>
</feature>
<feature type="disulfide bond" evidence="1">
    <location>
        <begin position="64"/>
        <end position="104"/>
    </location>
</feature>
<feature type="sequence variant" id="VAR_011640" description="In dbSNP:rs854625." evidence="5">
    <original>T</original>
    <variation>I</variation>
    <location>
        <position position="24"/>
    </location>
</feature>
<feature type="sequence conflict" description="In Ref. 1; AAD10847." evidence="6" ref="1">
    <original>V</original>
    <variation>I</variation>
    <location>
        <position position="14"/>
    </location>
</feature>
<feature type="strand" evidence="7">
    <location>
        <begin position="59"/>
        <end position="61"/>
    </location>
</feature>
<feature type="helix" evidence="8">
    <location>
        <begin position="64"/>
        <end position="66"/>
    </location>
</feature>
<feature type="strand" evidence="8">
    <location>
        <begin position="67"/>
        <end position="72"/>
    </location>
</feature>
<feature type="strand" evidence="8">
    <location>
        <begin position="77"/>
        <end position="79"/>
    </location>
</feature>
<feature type="strand" evidence="8">
    <location>
        <begin position="82"/>
        <end position="88"/>
    </location>
</feature>
<feature type="strand" evidence="8">
    <location>
        <begin position="92"/>
        <end position="94"/>
    </location>
</feature>
<feature type="helix" evidence="8">
    <location>
        <begin position="99"/>
        <end position="107"/>
    </location>
</feature>
<organism>
    <name type="scientific">Homo sapiens</name>
    <name type="common">Human</name>
    <dbReference type="NCBI Taxonomy" id="9606"/>
    <lineage>
        <taxon>Eukaryota</taxon>
        <taxon>Metazoa</taxon>
        <taxon>Chordata</taxon>
        <taxon>Craniata</taxon>
        <taxon>Vertebrata</taxon>
        <taxon>Euteleostomi</taxon>
        <taxon>Mammalia</taxon>
        <taxon>Eutheria</taxon>
        <taxon>Euarchontoglires</taxon>
        <taxon>Primates</taxon>
        <taxon>Haplorrhini</taxon>
        <taxon>Catarrhini</taxon>
        <taxon>Hominidae</taxon>
        <taxon>Homo</taxon>
    </lineage>
</organism>
<gene>
    <name type="primary">CCL15</name>
    <name type="synonym">MIP5</name>
    <name type="synonym">NCC3</name>
    <name type="synonym">SCYA15</name>
</gene>
<evidence type="ECO:0000269" key="1">
    <source>
    </source>
</evidence>
<evidence type="ECO:0000269" key="2">
    <source>
    </source>
</evidence>
<evidence type="ECO:0000269" key="3">
    <source>
    </source>
</evidence>
<evidence type="ECO:0000269" key="4">
    <source>
    </source>
</evidence>
<evidence type="ECO:0000269" key="5">
    <source>
    </source>
</evidence>
<evidence type="ECO:0000305" key="6"/>
<evidence type="ECO:0007829" key="7">
    <source>
        <dbReference type="PDB" id="2HCC"/>
    </source>
</evidence>
<evidence type="ECO:0007829" key="8">
    <source>
        <dbReference type="PDB" id="7VL9"/>
    </source>
</evidence>
<accession>Q16663</accession>
<accession>B2RU34</accession>
<accession>E1P651</accession>
<accession>Q9UM74</accession>
<proteinExistence type="evidence at protein level"/>
<dbReference type="EMBL" id="U58914">
    <property type="protein sequence ID" value="AAD10847.1"/>
    <property type="molecule type" value="mRNA"/>
</dbReference>
<dbReference type="EMBL" id="AF031587">
    <property type="protein sequence ID" value="AAB94617.1"/>
    <property type="molecule type" value="mRNA"/>
</dbReference>
<dbReference type="EMBL" id="Z70293">
    <property type="protein sequence ID" value="CAA94308.1"/>
    <property type="molecule type" value="mRNA"/>
</dbReference>
<dbReference type="EMBL" id="Z70292">
    <property type="protein sequence ID" value="CAA94306.1"/>
    <property type="molecule type" value="mRNA"/>
</dbReference>
<dbReference type="EMBL" id="AF088219">
    <property type="protein sequence ID" value="AAC63328.1"/>
    <property type="molecule type" value="Genomic_DNA"/>
</dbReference>
<dbReference type="EMBL" id="CH471147">
    <property type="protein sequence ID" value="EAW80110.1"/>
    <property type="molecule type" value="Genomic_DNA"/>
</dbReference>
<dbReference type="EMBL" id="CH471147">
    <property type="protein sequence ID" value="EAW80111.1"/>
    <property type="molecule type" value="Genomic_DNA"/>
</dbReference>
<dbReference type="EMBL" id="CH471147">
    <property type="protein sequence ID" value="EAW80112.1"/>
    <property type="molecule type" value="Genomic_DNA"/>
</dbReference>
<dbReference type="EMBL" id="CH471147">
    <property type="protein sequence ID" value="EAW80113.1"/>
    <property type="molecule type" value="Genomic_DNA"/>
</dbReference>
<dbReference type="EMBL" id="BC140941">
    <property type="protein sequence ID" value="AAI40942.1"/>
    <property type="molecule type" value="mRNA"/>
</dbReference>
<dbReference type="CCDS" id="CCDS11304.1"/>
<dbReference type="RefSeq" id="NP_116741.2">
    <property type="nucleotide sequence ID" value="NM_032965.6"/>
</dbReference>
<dbReference type="PDB" id="2HCC">
    <property type="method" value="NMR"/>
    <property type="chains" value="A=48-113"/>
</dbReference>
<dbReference type="PDB" id="7VL9">
    <property type="method" value="EM"/>
    <property type="resolution" value="2.60 A"/>
    <property type="chains" value="L=47-113"/>
</dbReference>
<dbReference type="PDB" id="7VLA">
    <property type="method" value="EM"/>
    <property type="resolution" value="2.70 A"/>
    <property type="chains" value="L=48-113"/>
</dbReference>
<dbReference type="PDBsum" id="2HCC"/>
<dbReference type="PDBsum" id="7VL9"/>
<dbReference type="PDBsum" id="7VLA"/>
<dbReference type="BMRB" id="Q16663"/>
<dbReference type="EMDB" id="EMD-32021"/>
<dbReference type="EMDB" id="EMD-32022"/>
<dbReference type="SMR" id="Q16663"/>
<dbReference type="BioGRID" id="112262">
    <property type="interactions" value="6"/>
</dbReference>
<dbReference type="DIP" id="DIP-6218N"/>
<dbReference type="FunCoup" id="Q16663">
    <property type="interactions" value="591"/>
</dbReference>
<dbReference type="IntAct" id="Q16663">
    <property type="interactions" value="6"/>
</dbReference>
<dbReference type="STRING" id="9606.ENSP00000484078"/>
<dbReference type="BioMuta" id="CCL15"/>
<dbReference type="DMDM" id="3915594"/>
<dbReference type="MassIVE" id="Q16663"/>
<dbReference type="PaxDb" id="9606-ENSP00000484078"/>
<dbReference type="PeptideAtlas" id="Q16663"/>
<dbReference type="ProteomicsDB" id="61020"/>
<dbReference type="Antibodypedia" id="73667">
    <property type="antibodies" value="423 antibodies from 27 providers"/>
</dbReference>
<dbReference type="DNASU" id="6359"/>
<dbReference type="Ensembl" id="ENST00000614050.1">
    <property type="protein sequence ID" value="ENSP00000477788.1"/>
    <property type="gene ID" value="ENSG00000275528.2"/>
</dbReference>
<dbReference type="Ensembl" id="ENST00000617897.2">
    <property type="protein sequence ID" value="ENSP00000484078.1"/>
    <property type="gene ID" value="ENSG00000275718.2"/>
</dbReference>
<dbReference type="GeneID" id="6359"/>
<dbReference type="KEGG" id="hsa:6359"/>
<dbReference type="MANE-Select" id="ENST00000617897.2">
    <property type="protein sequence ID" value="ENSP00000484078.1"/>
    <property type="RefSeq nucleotide sequence ID" value="NM_032965.6"/>
    <property type="RefSeq protein sequence ID" value="NP_116741.2"/>
</dbReference>
<dbReference type="UCSC" id="uc032gbw.1">
    <property type="organism name" value="human"/>
</dbReference>
<dbReference type="AGR" id="HGNC:10613"/>
<dbReference type="CTD" id="6359"/>
<dbReference type="DisGeNET" id="6359"/>
<dbReference type="GeneCards" id="CCL15"/>
<dbReference type="HGNC" id="HGNC:10613">
    <property type="gene designation" value="CCL15"/>
</dbReference>
<dbReference type="HPA" id="ENSG00000275718">
    <property type="expression patterns" value="Group enriched (intestine, liver)"/>
</dbReference>
<dbReference type="MIM" id="601393">
    <property type="type" value="gene"/>
</dbReference>
<dbReference type="neXtProt" id="NX_Q16663"/>
<dbReference type="OpenTargets" id="ENSG00000275718"/>
<dbReference type="PharmGKB" id="PA35546"/>
<dbReference type="VEuPathDB" id="HostDB:ENSG00000275718"/>
<dbReference type="eggNOG" id="ENOG502TJX7">
    <property type="taxonomic scope" value="Eukaryota"/>
</dbReference>
<dbReference type="GeneTree" id="ENSGT01100000263482"/>
<dbReference type="HOGENOM" id="CLU_141716_4_1_1"/>
<dbReference type="InParanoid" id="Q16663"/>
<dbReference type="OMA" id="PIRCSLM"/>
<dbReference type="OrthoDB" id="9447832at2759"/>
<dbReference type="PAN-GO" id="Q16663">
    <property type="GO annotations" value="14 GO annotations based on evolutionary models"/>
</dbReference>
<dbReference type="PhylomeDB" id="Q16663"/>
<dbReference type="TreeFam" id="TF334888"/>
<dbReference type="PathwayCommons" id="Q16663"/>
<dbReference type="SignaLink" id="Q16663"/>
<dbReference type="BioGRID-ORCS" id="6359">
    <property type="hits" value="6 hits in 1093 CRISPR screens"/>
</dbReference>
<dbReference type="EvolutionaryTrace" id="Q16663"/>
<dbReference type="GenomeRNAi" id="6359"/>
<dbReference type="Pharos" id="Q16663">
    <property type="development level" value="Tbio"/>
</dbReference>
<dbReference type="PRO" id="PR:Q16663"/>
<dbReference type="Proteomes" id="UP000005640">
    <property type="component" value="Chromosome 17"/>
</dbReference>
<dbReference type="RNAct" id="Q16663">
    <property type="molecule type" value="protein"/>
</dbReference>
<dbReference type="Bgee" id="ENSG00000275718">
    <property type="expression patterns" value="Expressed in mucosa of transverse colon and 71 other cell types or tissues"/>
</dbReference>
<dbReference type="ExpressionAtlas" id="Q16663">
    <property type="expression patterns" value="baseline and differential"/>
</dbReference>
<dbReference type="GO" id="GO:0005615">
    <property type="term" value="C:extracellular space"/>
    <property type="evidence" value="ECO:0000318"/>
    <property type="project" value="GO_Central"/>
</dbReference>
<dbReference type="GO" id="GO:0048020">
    <property type="term" value="F:CCR chemokine receptor binding"/>
    <property type="evidence" value="ECO:0000318"/>
    <property type="project" value="GO_Central"/>
</dbReference>
<dbReference type="GO" id="GO:0042056">
    <property type="term" value="F:chemoattractant activity"/>
    <property type="evidence" value="ECO:0000314"/>
    <property type="project" value="UniProtKB"/>
</dbReference>
<dbReference type="GO" id="GO:0008009">
    <property type="term" value="F:chemokine activity"/>
    <property type="evidence" value="ECO:0000318"/>
    <property type="project" value="GO_Central"/>
</dbReference>
<dbReference type="GO" id="GO:0008201">
    <property type="term" value="F:heparin binding"/>
    <property type="evidence" value="ECO:0007669"/>
    <property type="project" value="UniProtKB-KW"/>
</dbReference>
<dbReference type="GO" id="GO:0005102">
    <property type="term" value="F:signaling receptor binding"/>
    <property type="evidence" value="ECO:0000304"/>
    <property type="project" value="ProtInc"/>
</dbReference>
<dbReference type="GO" id="GO:0061844">
    <property type="term" value="P:antimicrobial humoral immune response mediated by antimicrobial peptide"/>
    <property type="evidence" value="ECO:0000318"/>
    <property type="project" value="GO_Central"/>
</dbReference>
<dbReference type="GO" id="GO:0060326">
    <property type="term" value="P:cell chemotaxis"/>
    <property type="evidence" value="ECO:0000318"/>
    <property type="project" value="GO_Central"/>
</dbReference>
<dbReference type="GO" id="GO:0007267">
    <property type="term" value="P:cell-cell signaling"/>
    <property type="evidence" value="ECO:0000304"/>
    <property type="project" value="ProtInc"/>
</dbReference>
<dbReference type="GO" id="GO:0070098">
    <property type="term" value="P:chemokine-mediated signaling pathway"/>
    <property type="evidence" value="ECO:0000318"/>
    <property type="project" value="GO_Central"/>
</dbReference>
<dbReference type="GO" id="GO:0006935">
    <property type="term" value="P:chemotaxis"/>
    <property type="evidence" value="ECO:0000304"/>
    <property type="project" value="ProtInc"/>
</dbReference>
<dbReference type="GO" id="GO:0006954">
    <property type="term" value="P:inflammatory response"/>
    <property type="evidence" value="ECO:0000318"/>
    <property type="project" value="GO_Central"/>
</dbReference>
<dbReference type="GO" id="GO:0006874">
    <property type="term" value="P:intracellular calcium ion homeostasis"/>
    <property type="evidence" value="ECO:0000304"/>
    <property type="project" value="ProtInc"/>
</dbReference>
<dbReference type="GO" id="GO:0030335">
    <property type="term" value="P:positive regulation of cell migration"/>
    <property type="evidence" value="ECO:0000318"/>
    <property type="project" value="GO_Central"/>
</dbReference>
<dbReference type="GO" id="GO:0007165">
    <property type="term" value="P:signal transduction"/>
    <property type="evidence" value="ECO:0000304"/>
    <property type="project" value="ProtInc"/>
</dbReference>
<dbReference type="CDD" id="cd00272">
    <property type="entry name" value="Chemokine_CC"/>
    <property type="match status" value="1"/>
</dbReference>
<dbReference type="FunFam" id="2.40.50.40:FF:000002">
    <property type="entry name" value="C-C motif chemokine"/>
    <property type="match status" value="1"/>
</dbReference>
<dbReference type="Gene3D" id="2.40.50.40">
    <property type="match status" value="1"/>
</dbReference>
<dbReference type="InterPro" id="IPR039809">
    <property type="entry name" value="Chemokine_b/g/d"/>
</dbReference>
<dbReference type="InterPro" id="IPR000827">
    <property type="entry name" value="Chemokine_CC_CS"/>
</dbReference>
<dbReference type="InterPro" id="IPR001811">
    <property type="entry name" value="Chemokine_IL8-like_dom"/>
</dbReference>
<dbReference type="InterPro" id="IPR036048">
    <property type="entry name" value="Interleukin_8-like_sf"/>
</dbReference>
<dbReference type="PANTHER" id="PTHR12015:SF77">
    <property type="entry name" value="C-C MOTIF CHEMOKINE 15"/>
    <property type="match status" value="1"/>
</dbReference>
<dbReference type="PANTHER" id="PTHR12015">
    <property type="entry name" value="SMALL INDUCIBLE CYTOKINE A"/>
    <property type="match status" value="1"/>
</dbReference>
<dbReference type="Pfam" id="PF00048">
    <property type="entry name" value="IL8"/>
    <property type="match status" value="1"/>
</dbReference>
<dbReference type="SMART" id="SM00199">
    <property type="entry name" value="SCY"/>
    <property type="match status" value="1"/>
</dbReference>
<dbReference type="SUPFAM" id="SSF54117">
    <property type="entry name" value="Interleukin 8-like chemokines"/>
    <property type="match status" value="1"/>
</dbReference>
<dbReference type="PROSITE" id="PS00472">
    <property type="entry name" value="SMALL_CYTOKINES_CC"/>
    <property type="match status" value="1"/>
</dbReference>
<keyword id="KW-0002">3D-structure</keyword>
<keyword id="KW-0145">Chemotaxis</keyword>
<keyword id="KW-0202">Cytokine</keyword>
<keyword id="KW-0903">Direct protein sequencing</keyword>
<keyword id="KW-1015">Disulfide bond</keyword>
<keyword id="KW-0358">Heparin-binding</keyword>
<keyword id="KW-1267">Proteomics identification</keyword>
<keyword id="KW-1185">Reference proteome</keyword>
<keyword id="KW-0964">Secreted</keyword>
<keyword id="KW-0732">Signal</keyword>
<sequence>MKVSVAALSCLMLVAVLGSQAQFTNDAETELMMSKLPLENPVVLNSFHFAADCCTSYISQSIPCSLMKSYFETSSECSKPGVIFLTKKGRQVCAKPSGPGVQDCMKKLKPYSI</sequence>
<protein>
    <recommendedName>
        <fullName>C-C motif chemokine 15</fullName>
    </recommendedName>
    <alternativeName>
        <fullName>Chemokine CC-2</fullName>
        <shortName>HCC-2</shortName>
    </alternativeName>
    <alternativeName>
        <fullName>Leukotactin-1</fullName>
        <shortName>LKN-1</shortName>
    </alternativeName>
    <alternativeName>
        <fullName>MIP-1 delta</fullName>
    </alternativeName>
    <alternativeName>
        <fullName>Macrophage inflammatory protein 5</fullName>
        <shortName>MIP-5</shortName>
    </alternativeName>
    <alternativeName>
        <fullName>Mrp-2b</fullName>
    </alternativeName>
    <alternativeName>
        <fullName>NCC-3</fullName>
    </alternativeName>
    <alternativeName>
        <fullName>Small-inducible cytokine A15</fullName>
    </alternativeName>
    <component>
        <recommendedName>
            <fullName>CCL15(22-92)</fullName>
        </recommendedName>
    </component>
    <component>
        <recommendedName>
            <fullName>CCL15(25-92)</fullName>
        </recommendedName>
    </component>
    <component>
        <recommendedName>
            <fullName>CCL15(29-92)</fullName>
        </recommendedName>
    </component>
</protein>